<feature type="signal peptide" evidence="2">
    <location>
        <begin position="1"/>
        <end position="21"/>
    </location>
</feature>
<feature type="chain" id="PRO_0000020318" description="SPARC-related modular calcium-binding protein 2">
    <location>
        <begin position="22"/>
        <end position="446"/>
    </location>
</feature>
<feature type="domain" description="Kazal-like" evidence="5">
    <location>
        <begin position="34"/>
        <end position="86"/>
    </location>
</feature>
<feature type="domain" description="Thyroglobulin type-1 1" evidence="4">
    <location>
        <begin position="87"/>
        <end position="153"/>
    </location>
</feature>
<feature type="domain" description="Thyroglobulin type-1 2" evidence="4">
    <location>
        <begin position="213"/>
        <end position="281"/>
    </location>
</feature>
<feature type="domain" description="EF-hand 1" evidence="3">
    <location>
        <begin position="347"/>
        <end position="382"/>
    </location>
</feature>
<feature type="domain" description="EF-hand 2" evidence="3">
    <location>
        <begin position="384"/>
        <end position="419"/>
    </location>
</feature>
<feature type="region of interest" description="Disordered" evidence="6">
    <location>
        <begin position="147"/>
        <end position="228"/>
    </location>
</feature>
<feature type="region of interest" description="Disordered" evidence="6">
    <location>
        <begin position="416"/>
        <end position="446"/>
    </location>
</feature>
<feature type="compositionally biased region" description="Basic and acidic residues" evidence="6">
    <location>
        <begin position="161"/>
        <end position="172"/>
    </location>
</feature>
<feature type="compositionally biased region" description="Polar residues" evidence="6">
    <location>
        <begin position="206"/>
        <end position="216"/>
    </location>
</feature>
<feature type="compositionally biased region" description="Basic and acidic residues" evidence="6">
    <location>
        <begin position="217"/>
        <end position="228"/>
    </location>
</feature>
<feature type="binding site" evidence="3">
    <location>
        <position position="360"/>
    </location>
    <ligand>
        <name>Ca(2+)</name>
        <dbReference type="ChEBI" id="CHEBI:29108"/>
        <label>1</label>
    </ligand>
</feature>
<feature type="binding site" evidence="3">
    <location>
        <position position="362"/>
    </location>
    <ligand>
        <name>Ca(2+)</name>
        <dbReference type="ChEBI" id="CHEBI:29108"/>
        <label>1</label>
    </ligand>
</feature>
<feature type="binding site" evidence="3">
    <location>
        <position position="364"/>
    </location>
    <ligand>
        <name>Ca(2+)</name>
        <dbReference type="ChEBI" id="CHEBI:29108"/>
        <label>1</label>
    </ligand>
</feature>
<feature type="binding site" evidence="3">
    <location>
        <position position="366"/>
    </location>
    <ligand>
        <name>Ca(2+)</name>
        <dbReference type="ChEBI" id="CHEBI:29108"/>
        <label>1</label>
    </ligand>
</feature>
<feature type="binding site" evidence="3">
    <location>
        <position position="371"/>
    </location>
    <ligand>
        <name>Ca(2+)</name>
        <dbReference type="ChEBI" id="CHEBI:29108"/>
        <label>1</label>
    </ligand>
</feature>
<feature type="binding site" evidence="3">
    <location>
        <position position="397"/>
    </location>
    <ligand>
        <name>Ca(2+)</name>
        <dbReference type="ChEBI" id="CHEBI:29108"/>
        <label>2</label>
    </ligand>
</feature>
<feature type="binding site" evidence="3">
    <location>
        <position position="399"/>
    </location>
    <ligand>
        <name>Ca(2+)</name>
        <dbReference type="ChEBI" id="CHEBI:29108"/>
        <label>2</label>
    </ligand>
</feature>
<feature type="binding site" evidence="3">
    <location>
        <position position="401"/>
    </location>
    <ligand>
        <name>Ca(2+)</name>
        <dbReference type="ChEBI" id="CHEBI:29108"/>
        <label>2</label>
    </ligand>
</feature>
<feature type="binding site" evidence="3">
    <location>
        <position position="403"/>
    </location>
    <ligand>
        <name>Ca(2+)</name>
        <dbReference type="ChEBI" id="CHEBI:29108"/>
        <label>2</label>
    </ligand>
</feature>
<feature type="binding site" evidence="3">
    <location>
        <position position="408"/>
    </location>
    <ligand>
        <name>Ca(2+)</name>
        <dbReference type="ChEBI" id="CHEBI:29108"/>
        <label>2</label>
    </ligand>
</feature>
<feature type="glycosylation site" description="N-linked (GlcNAc...) asparagine" evidence="2">
    <location>
        <position position="206"/>
    </location>
</feature>
<feature type="glycosylation site" description="N-linked (GlcNAc...) asparagine" evidence="2">
    <location>
        <position position="362"/>
    </location>
</feature>
<feature type="disulfide bond" evidence="5">
    <location>
        <begin position="40"/>
        <end position="71"/>
    </location>
</feature>
<feature type="disulfide bond" evidence="5">
    <location>
        <begin position="44"/>
        <end position="64"/>
    </location>
</feature>
<feature type="disulfide bond" evidence="5">
    <location>
        <begin position="53"/>
        <end position="84"/>
    </location>
</feature>
<feature type="disulfide bond" evidence="1">
    <location>
        <begin position="90"/>
        <end position="113"/>
    </location>
</feature>
<feature type="disulfide bond" evidence="1">
    <location>
        <begin position="124"/>
        <end position="131"/>
    </location>
</feature>
<feature type="disulfide bond" evidence="1">
    <location>
        <begin position="133"/>
        <end position="153"/>
    </location>
</feature>
<feature type="disulfide bond" evidence="1">
    <location>
        <begin position="216"/>
        <end position="240"/>
    </location>
</feature>
<feature type="disulfide bond" evidence="1">
    <location>
        <begin position="251"/>
        <end position="258"/>
    </location>
</feature>
<feature type="disulfide bond" evidence="1">
    <location>
        <begin position="260"/>
        <end position="281"/>
    </location>
</feature>
<feature type="splice variant" id="VSP_008722" description="In isoform 2." evidence="9 10">
    <original>T</original>
    <variation>TVSLQIFSVLNS</variation>
    <location>
        <position position="170"/>
    </location>
</feature>
<feature type="sequence conflict" description="In Ref. 8; CAC10353." evidence="11" ref="8">
    <original>KT</original>
    <variation>TR</variation>
    <location>
        <begin position="169"/>
        <end position="170"/>
    </location>
</feature>
<feature type="sequence conflict" description="In Ref. 1; BAB20267." evidence="11" ref="1">
    <original>S</original>
    <variation>P</variation>
    <location>
        <position position="212"/>
    </location>
</feature>
<feature type="sequence conflict" description="In Ref. 6; AAH47583." evidence="11" ref="6">
    <original>A</original>
    <variation>V</variation>
    <location>
        <position position="434"/>
    </location>
</feature>
<feature type="sequence conflict" description="In Ref. 8; CAC10353." evidence="11" ref="8">
    <original>N</original>
    <variation>Y</variation>
    <location>
        <position position="439"/>
    </location>
</feature>
<sequence>MLLPQLCWLPLLAGLLPPVPAQKFSALTFLRVDQDKDKDCSLDCAGSPQKPLCASDGRTFLSRCEFQRAKCKDPQLEIAYRGNCKDVSRCVAERKYTQEQARKEFQQVFIPECNDDGTYSQVQCHSYTGYCWCVTPNGRPISGTAVAHKTPRCPGSVNEKLPQREGTGKTDDAAAPALETQPQGDEEDIASRYPTLWTEQVKSRQNKTNKNSVSSCDQEHQSALEEAKQPKNDNVVIPECAHGGLYKPVQCHPSTGYCWCVLVDTGRPIPGTSTRYEQPKCDNTARAHPAKARDLYKGRQLQGCPGAKKHEFLTSVLDALSTDMVHAASDPSSSSGRLSEPDPSHTLEERVVHWYFKLLDKNSSGDIGKKEIKPFKRFLRKKSKPKKCVKKFVEYCDVNNDKSISVQELMGCLGVAKEDGKADTKKRHTPRGHAESTSNRQPRKQG</sequence>
<protein>
    <recommendedName>
        <fullName>SPARC-related modular calcium-binding protein 2</fullName>
    </recommendedName>
    <alternativeName>
        <fullName>Secreted modular calcium-binding protein 2</fullName>
        <shortName>SMOC-2</shortName>
    </alternativeName>
    <alternativeName>
        <fullName>Smooth muscle-associated protein 2</fullName>
        <shortName>SMAP-2</shortName>
    </alternativeName>
</protein>
<reference key="1">
    <citation type="journal article" date="2002" name="Biochim. Biophys. Acta">
        <title>Identification of a novel smooth muscle associated protein, smap2, upregulated during neointima formation in a rat carotid endarterectomy model.</title>
        <authorList>
            <person name="Nishimoto S."/>
            <person name="Hamajima Y."/>
            <person name="Toda Y."/>
            <person name="Toyoda H."/>
            <person name="Kitamura K."/>
            <person name="Komurasaki T."/>
        </authorList>
    </citation>
    <scope>NUCLEOTIDE SEQUENCE [MRNA] (ISOFORMS 1 AND 2)</scope>
    <scope>TISSUE SPECIFICITY</scope>
    <source>
        <tissue>Heart</tissue>
    </source>
</reference>
<reference key="2">
    <citation type="journal article" date="2004" name="Nat. Genet.">
        <title>Complete sequencing and characterization of 21,243 full-length human cDNAs.</title>
        <authorList>
            <person name="Ota T."/>
            <person name="Suzuki Y."/>
            <person name="Nishikawa T."/>
            <person name="Otsuki T."/>
            <person name="Sugiyama T."/>
            <person name="Irie R."/>
            <person name="Wakamatsu A."/>
            <person name="Hayashi K."/>
            <person name="Sato H."/>
            <person name="Nagai K."/>
            <person name="Kimura K."/>
            <person name="Makita H."/>
            <person name="Sekine M."/>
            <person name="Obayashi M."/>
            <person name="Nishi T."/>
            <person name="Shibahara T."/>
            <person name="Tanaka T."/>
            <person name="Ishii S."/>
            <person name="Yamamoto J."/>
            <person name="Saito K."/>
            <person name="Kawai Y."/>
            <person name="Isono Y."/>
            <person name="Nakamura Y."/>
            <person name="Nagahari K."/>
            <person name="Murakami K."/>
            <person name="Yasuda T."/>
            <person name="Iwayanagi T."/>
            <person name="Wagatsuma M."/>
            <person name="Shiratori A."/>
            <person name="Sudo H."/>
            <person name="Hosoiri T."/>
            <person name="Kaku Y."/>
            <person name="Kodaira H."/>
            <person name="Kondo H."/>
            <person name="Sugawara M."/>
            <person name="Takahashi M."/>
            <person name="Kanda K."/>
            <person name="Yokoi T."/>
            <person name="Furuya T."/>
            <person name="Kikkawa E."/>
            <person name="Omura Y."/>
            <person name="Abe K."/>
            <person name="Kamihara K."/>
            <person name="Katsuta N."/>
            <person name="Sato K."/>
            <person name="Tanikawa M."/>
            <person name="Yamazaki M."/>
            <person name="Ninomiya K."/>
            <person name="Ishibashi T."/>
            <person name="Yamashita H."/>
            <person name="Murakawa K."/>
            <person name="Fujimori K."/>
            <person name="Tanai H."/>
            <person name="Kimata M."/>
            <person name="Watanabe M."/>
            <person name="Hiraoka S."/>
            <person name="Chiba Y."/>
            <person name="Ishida S."/>
            <person name="Ono Y."/>
            <person name="Takiguchi S."/>
            <person name="Watanabe S."/>
            <person name="Yosida M."/>
            <person name="Hotuta T."/>
            <person name="Kusano J."/>
            <person name="Kanehori K."/>
            <person name="Takahashi-Fujii A."/>
            <person name="Hara H."/>
            <person name="Tanase T.-O."/>
            <person name="Nomura Y."/>
            <person name="Togiya S."/>
            <person name="Komai F."/>
            <person name="Hara R."/>
            <person name="Takeuchi K."/>
            <person name="Arita M."/>
            <person name="Imose N."/>
            <person name="Musashino K."/>
            <person name="Yuuki H."/>
            <person name="Oshima A."/>
            <person name="Sasaki N."/>
            <person name="Aotsuka S."/>
            <person name="Yoshikawa Y."/>
            <person name="Matsunawa H."/>
            <person name="Ichihara T."/>
            <person name="Shiohata N."/>
            <person name="Sano S."/>
            <person name="Moriya S."/>
            <person name="Momiyama H."/>
            <person name="Satoh N."/>
            <person name="Takami S."/>
            <person name="Terashima Y."/>
            <person name="Suzuki O."/>
            <person name="Nakagawa S."/>
            <person name="Senoh A."/>
            <person name="Mizoguchi H."/>
            <person name="Goto Y."/>
            <person name="Shimizu F."/>
            <person name="Wakebe H."/>
            <person name="Hishigaki H."/>
            <person name="Watanabe T."/>
            <person name="Sugiyama A."/>
            <person name="Takemoto M."/>
            <person name="Kawakami B."/>
            <person name="Yamazaki M."/>
            <person name="Watanabe K."/>
            <person name="Kumagai A."/>
            <person name="Itakura S."/>
            <person name="Fukuzumi Y."/>
            <person name="Fujimori Y."/>
            <person name="Komiyama M."/>
            <person name="Tashiro H."/>
            <person name="Tanigami A."/>
            <person name="Fujiwara T."/>
            <person name="Ono T."/>
            <person name="Yamada K."/>
            <person name="Fujii Y."/>
            <person name="Ozaki K."/>
            <person name="Hirao M."/>
            <person name="Ohmori Y."/>
            <person name="Kawabata A."/>
            <person name="Hikiji T."/>
            <person name="Kobatake N."/>
            <person name="Inagaki H."/>
            <person name="Ikema Y."/>
            <person name="Okamoto S."/>
            <person name="Okitani R."/>
            <person name="Kawakami T."/>
            <person name="Noguchi S."/>
            <person name="Itoh T."/>
            <person name="Shigeta K."/>
            <person name="Senba T."/>
            <person name="Matsumura K."/>
            <person name="Nakajima Y."/>
            <person name="Mizuno T."/>
            <person name="Morinaga M."/>
            <person name="Sasaki M."/>
            <person name="Togashi T."/>
            <person name="Oyama M."/>
            <person name="Hata H."/>
            <person name="Watanabe M."/>
            <person name="Komatsu T."/>
            <person name="Mizushima-Sugano J."/>
            <person name="Satoh T."/>
            <person name="Shirai Y."/>
            <person name="Takahashi Y."/>
            <person name="Nakagawa K."/>
            <person name="Okumura K."/>
            <person name="Nagase T."/>
            <person name="Nomura N."/>
            <person name="Kikuchi H."/>
            <person name="Masuho Y."/>
            <person name="Yamashita R."/>
            <person name="Nakai K."/>
            <person name="Yada T."/>
            <person name="Nakamura Y."/>
            <person name="Ohara O."/>
            <person name="Isogai T."/>
            <person name="Sugano S."/>
        </authorList>
    </citation>
    <scope>NUCLEOTIDE SEQUENCE [LARGE SCALE MRNA] (ISOFORM 1)</scope>
    <source>
        <tissue>Placenta</tissue>
    </source>
</reference>
<reference key="3">
    <citation type="journal article" date="2007" name="BMC Genomics">
        <title>The full-ORF clone resource of the German cDNA consortium.</title>
        <authorList>
            <person name="Bechtel S."/>
            <person name="Rosenfelder H."/>
            <person name="Duda A."/>
            <person name="Schmidt C.P."/>
            <person name="Ernst U."/>
            <person name="Wellenreuther R."/>
            <person name="Mehrle A."/>
            <person name="Schuster C."/>
            <person name="Bahr A."/>
            <person name="Bloecker H."/>
            <person name="Heubner D."/>
            <person name="Hoerlein A."/>
            <person name="Michel G."/>
            <person name="Wedler H."/>
            <person name="Koehrer K."/>
            <person name="Ottenwaelder B."/>
            <person name="Poustka A."/>
            <person name="Wiemann S."/>
            <person name="Schupp I."/>
        </authorList>
    </citation>
    <scope>NUCLEOTIDE SEQUENCE [LARGE SCALE MRNA] (ISOFORM 2)</scope>
    <source>
        <tissue>Lymph node</tissue>
    </source>
</reference>
<reference key="4">
    <citation type="journal article" date="2003" name="Nature">
        <title>The DNA sequence and analysis of human chromosome 6.</title>
        <authorList>
            <person name="Mungall A.J."/>
            <person name="Palmer S.A."/>
            <person name="Sims S.K."/>
            <person name="Edwards C.A."/>
            <person name="Ashurst J.L."/>
            <person name="Wilming L."/>
            <person name="Jones M.C."/>
            <person name="Horton R."/>
            <person name="Hunt S.E."/>
            <person name="Scott C.E."/>
            <person name="Gilbert J.G.R."/>
            <person name="Clamp M.E."/>
            <person name="Bethel G."/>
            <person name="Milne S."/>
            <person name="Ainscough R."/>
            <person name="Almeida J.P."/>
            <person name="Ambrose K.D."/>
            <person name="Andrews T.D."/>
            <person name="Ashwell R.I.S."/>
            <person name="Babbage A.K."/>
            <person name="Bagguley C.L."/>
            <person name="Bailey J."/>
            <person name="Banerjee R."/>
            <person name="Barker D.J."/>
            <person name="Barlow K.F."/>
            <person name="Bates K."/>
            <person name="Beare D.M."/>
            <person name="Beasley H."/>
            <person name="Beasley O."/>
            <person name="Bird C.P."/>
            <person name="Blakey S.E."/>
            <person name="Bray-Allen S."/>
            <person name="Brook J."/>
            <person name="Brown A.J."/>
            <person name="Brown J.Y."/>
            <person name="Burford D.C."/>
            <person name="Burrill W."/>
            <person name="Burton J."/>
            <person name="Carder C."/>
            <person name="Carter N.P."/>
            <person name="Chapman J.C."/>
            <person name="Clark S.Y."/>
            <person name="Clark G."/>
            <person name="Clee C.M."/>
            <person name="Clegg S."/>
            <person name="Cobley V."/>
            <person name="Collier R.E."/>
            <person name="Collins J.E."/>
            <person name="Colman L.K."/>
            <person name="Corby N.R."/>
            <person name="Coville G.J."/>
            <person name="Culley K.M."/>
            <person name="Dhami P."/>
            <person name="Davies J."/>
            <person name="Dunn M."/>
            <person name="Earthrowl M.E."/>
            <person name="Ellington A.E."/>
            <person name="Evans K.A."/>
            <person name="Faulkner L."/>
            <person name="Francis M.D."/>
            <person name="Frankish A."/>
            <person name="Frankland J."/>
            <person name="French L."/>
            <person name="Garner P."/>
            <person name="Garnett J."/>
            <person name="Ghori M.J."/>
            <person name="Gilby L.M."/>
            <person name="Gillson C.J."/>
            <person name="Glithero R.J."/>
            <person name="Grafham D.V."/>
            <person name="Grant M."/>
            <person name="Gribble S."/>
            <person name="Griffiths C."/>
            <person name="Griffiths M.N.D."/>
            <person name="Hall R."/>
            <person name="Halls K.S."/>
            <person name="Hammond S."/>
            <person name="Harley J.L."/>
            <person name="Hart E.A."/>
            <person name="Heath P.D."/>
            <person name="Heathcott R."/>
            <person name="Holmes S.J."/>
            <person name="Howden P.J."/>
            <person name="Howe K.L."/>
            <person name="Howell G.R."/>
            <person name="Huckle E."/>
            <person name="Humphray S.J."/>
            <person name="Humphries M.D."/>
            <person name="Hunt A.R."/>
            <person name="Johnson C.M."/>
            <person name="Joy A.A."/>
            <person name="Kay M."/>
            <person name="Keenan S.J."/>
            <person name="Kimberley A.M."/>
            <person name="King A."/>
            <person name="Laird G.K."/>
            <person name="Langford C."/>
            <person name="Lawlor S."/>
            <person name="Leongamornlert D.A."/>
            <person name="Leversha M."/>
            <person name="Lloyd C.R."/>
            <person name="Lloyd D.M."/>
            <person name="Loveland J.E."/>
            <person name="Lovell J."/>
            <person name="Martin S."/>
            <person name="Mashreghi-Mohammadi M."/>
            <person name="Maslen G.L."/>
            <person name="Matthews L."/>
            <person name="McCann O.T."/>
            <person name="McLaren S.J."/>
            <person name="McLay K."/>
            <person name="McMurray A."/>
            <person name="Moore M.J.F."/>
            <person name="Mullikin J.C."/>
            <person name="Niblett D."/>
            <person name="Nickerson T."/>
            <person name="Novik K.L."/>
            <person name="Oliver K."/>
            <person name="Overton-Larty E.K."/>
            <person name="Parker A."/>
            <person name="Patel R."/>
            <person name="Pearce A.V."/>
            <person name="Peck A.I."/>
            <person name="Phillimore B.J.C.T."/>
            <person name="Phillips S."/>
            <person name="Plumb R.W."/>
            <person name="Porter K.M."/>
            <person name="Ramsey Y."/>
            <person name="Ranby S.A."/>
            <person name="Rice C.M."/>
            <person name="Ross M.T."/>
            <person name="Searle S.M."/>
            <person name="Sehra H.K."/>
            <person name="Sheridan E."/>
            <person name="Skuce C.D."/>
            <person name="Smith S."/>
            <person name="Smith M."/>
            <person name="Spraggon L."/>
            <person name="Squares S.L."/>
            <person name="Steward C.A."/>
            <person name="Sycamore N."/>
            <person name="Tamlyn-Hall G."/>
            <person name="Tester J."/>
            <person name="Theaker A.J."/>
            <person name="Thomas D.W."/>
            <person name="Thorpe A."/>
            <person name="Tracey A."/>
            <person name="Tromans A."/>
            <person name="Tubby B."/>
            <person name="Wall M."/>
            <person name="Wallis J.M."/>
            <person name="West A.P."/>
            <person name="White S.S."/>
            <person name="Whitehead S.L."/>
            <person name="Whittaker H."/>
            <person name="Wild A."/>
            <person name="Willey D.J."/>
            <person name="Wilmer T.E."/>
            <person name="Wood J.M."/>
            <person name="Wray P.W."/>
            <person name="Wyatt J.C."/>
            <person name="Young L."/>
            <person name="Younger R.M."/>
            <person name="Bentley D.R."/>
            <person name="Coulson A."/>
            <person name="Durbin R.M."/>
            <person name="Hubbard T."/>
            <person name="Sulston J.E."/>
            <person name="Dunham I."/>
            <person name="Rogers J."/>
            <person name="Beck S."/>
        </authorList>
    </citation>
    <scope>NUCLEOTIDE SEQUENCE [LARGE SCALE GENOMIC DNA]</scope>
</reference>
<reference key="5">
    <citation type="submission" date="2005-09" db="EMBL/GenBank/DDBJ databases">
        <authorList>
            <person name="Mural R.J."/>
            <person name="Istrail S."/>
            <person name="Sutton G.G."/>
            <person name="Florea L."/>
            <person name="Halpern A.L."/>
            <person name="Mobarry C.M."/>
            <person name="Lippert R."/>
            <person name="Walenz B."/>
            <person name="Shatkay H."/>
            <person name="Dew I."/>
            <person name="Miller J.R."/>
            <person name="Flanigan M.J."/>
            <person name="Edwards N.J."/>
            <person name="Bolanos R."/>
            <person name="Fasulo D."/>
            <person name="Halldorsson B.V."/>
            <person name="Hannenhalli S."/>
            <person name="Turner R."/>
            <person name="Yooseph S."/>
            <person name="Lu F."/>
            <person name="Nusskern D.R."/>
            <person name="Shue B.C."/>
            <person name="Zheng X.H."/>
            <person name="Zhong F."/>
            <person name="Delcher A.L."/>
            <person name="Huson D.H."/>
            <person name="Kravitz S.A."/>
            <person name="Mouchard L."/>
            <person name="Reinert K."/>
            <person name="Remington K.A."/>
            <person name="Clark A.G."/>
            <person name="Waterman M.S."/>
            <person name="Eichler E.E."/>
            <person name="Adams M.D."/>
            <person name="Hunkapiller M.W."/>
            <person name="Myers E.W."/>
            <person name="Venter J.C."/>
        </authorList>
    </citation>
    <scope>NUCLEOTIDE SEQUENCE [LARGE SCALE GENOMIC DNA]</scope>
</reference>
<reference key="6">
    <citation type="journal article" date="2004" name="Genome Res.">
        <title>The status, quality, and expansion of the NIH full-length cDNA project: the Mammalian Gene Collection (MGC).</title>
        <authorList>
            <consortium name="The MGC Project Team"/>
        </authorList>
    </citation>
    <scope>NUCLEOTIDE SEQUENCE [LARGE SCALE MRNA] (ISOFORM 1)</scope>
    <source>
        <tissue>Testis</tissue>
    </source>
</reference>
<reference key="7">
    <citation type="submission" date="1999-08" db="EMBL/GenBank/DDBJ databases">
        <authorList>
            <person name="Liu Y.Q."/>
            <person name="Liu B."/>
            <person name="Wang X.Y."/>
            <person name="Sheng H."/>
            <person name="Qin B.M."/>
            <person name="Zhang Q."/>
            <person name="Zheng W.Y."/>
            <person name="Hui R.T."/>
        </authorList>
    </citation>
    <scope>NUCLEOTIDE SEQUENCE [LARGE SCALE MRNA] OF 43-446 (ISOFORM 1)</scope>
    <source>
        <tissue>Aorta</tissue>
    </source>
</reference>
<reference key="8">
    <citation type="journal article" date="2003" name="Biochem. J.">
        <title>Characterization of SMOC-2, a modular extracellular calcium-binding protein.</title>
        <authorList>
            <person name="Vannahme C."/>
            <person name="Goesling S."/>
            <person name="Paulsson M."/>
            <person name="Maurer P."/>
            <person name="Hartmann U."/>
        </authorList>
    </citation>
    <scope>NUCLEOTIDE SEQUENCE [MRNA] OF 168-446</scope>
    <source>
        <tissue>Fetal brain</tissue>
    </source>
</reference>
<reference key="9">
    <citation type="journal article" date="2006" name="J. Biol. Chem.">
        <title>The novel SPARC family member SMOC-2 potentiates angiogenic growth factor activity.</title>
        <authorList>
            <person name="Rocnik E.F."/>
            <person name="Liu P."/>
            <person name="Sato K."/>
            <person name="Walsh K."/>
            <person name="Vaziri C."/>
        </authorList>
    </citation>
    <scope>FUNCTION</scope>
    <scope>SUBCELLULAR LOCATION</scope>
</reference>
<reference key="10">
    <citation type="journal article" date="2011" name="Am. J. Hum. Genet.">
        <title>Homozygosity mapping and candidate prioritization identify mutations, missed by whole-exome sequencing, in SMOC2, causing major dental developmental defects.</title>
        <authorList>
            <person name="Bloch-Zupan A."/>
            <person name="Jamet X."/>
            <person name="Etard C."/>
            <person name="Laugel V."/>
            <person name="Muller J."/>
            <person name="Geoffroy V."/>
            <person name="Strauss J.P."/>
            <person name="Pelletier V."/>
            <person name="Marion V."/>
            <person name="Poch O."/>
            <person name="Strahle U."/>
            <person name="Stoetzel C."/>
            <person name="Dollfus H."/>
        </authorList>
    </citation>
    <scope>INVOLVEMENT IN DTDP1</scope>
</reference>
<evidence type="ECO:0000250" key="1"/>
<evidence type="ECO:0000255" key="2"/>
<evidence type="ECO:0000255" key="3">
    <source>
        <dbReference type="PROSITE-ProRule" id="PRU00448"/>
    </source>
</evidence>
<evidence type="ECO:0000255" key="4">
    <source>
        <dbReference type="PROSITE-ProRule" id="PRU00500"/>
    </source>
</evidence>
<evidence type="ECO:0000255" key="5">
    <source>
        <dbReference type="PROSITE-ProRule" id="PRU00798"/>
    </source>
</evidence>
<evidence type="ECO:0000256" key="6">
    <source>
        <dbReference type="SAM" id="MobiDB-lite"/>
    </source>
</evidence>
<evidence type="ECO:0000269" key="7">
    <source>
    </source>
</evidence>
<evidence type="ECO:0000269" key="8">
    <source>
    </source>
</evidence>
<evidence type="ECO:0000303" key="9">
    <source>
    </source>
</evidence>
<evidence type="ECO:0000303" key="10">
    <source>
    </source>
</evidence>
<evidence type="ECO:0000305" key="11"/>
<gene>
    <name type="primary">SMOC2</name>
    <name type="synonym">SMAP2</name>
    <name type="ORF">MSTP117</name>
</gene>
<accession>Q9H3U7</accession>
<accession>B3KPS7</accession>
<accession>Q4G169</accession>
<accession>Q5TAT7</accession>
<accession>Q5TAT8</accession>
<accession>Q86VV9</accession>
<accession>Q96SF3</accession>
<accession>Q9H1L3</accession>
<accession>Q9H1L4</accession>
<accession>Q9H3U0</accession>
<accession>Q9H4F7</accession>
<accession>Q9HCV2</accession>
<dbReference type="EMBL" id="AB014730">
    <property type="protein sequence ID" value="BAB20267.1"/>
    <property type="molecule type" value="mRNA"/>
</dbReference>
<dbReference type="EMBL" id="AB014737">
    <property type="protein sequence ID" value="BAB20274.1"/>
    <property type="molecule type" value="mRNA"/>
</dbReference>
<dbReference type="EMBL" id="AK056700">
    <property type="protein sequence ID" value="BAG51789.1"/>
    <property type="molecule type" value="mRNA"/>
</dbReference>
<dbReference type="EMBL" id="AL832303">
    <property type="protein sequence ID" value="CAI46175.1"/>
    <property type="molecule type" value="mRNA"/>
</dbReference>
<dbReference type="EMBL" id="AL109940">
    <property type="status" value="NOT_ANNOTATED_CDS"/>
    <property type="molecule type" value="Genomic_DNA"/>
</dbReference>
<dbReference type="EMBL" id="AL136099">
    <property type="status" value="NOT_ANNOTATED_CDS"/>
    <property type="molecule type" value="Genomic_DNA"/>
</dbReference>
<dbReference type="EMBL" id="AL138918">
    <property type="status" value="NOT_ANNOTATED_CDS"/>
    <property type="molecule type" value="Genomic_DNA"/>
</dbReference>
<dbReference type="EMBL" id="AL442124">
    <property type="status" value="NOT_ANNOTATED_CDS"/>
    <property type="molecule type" value="Genomic_DNA"/>
</dbReference>
<dbReference type="EMBL" id="CH471051">
    <property type="protein sequence ID" value="EAW47462.1"/>
    <property type="molecule type" value="Genomic_DNA"/>
</dbReference>
<dbReference type="EMBL" id="BC028420">
    <property type="protein sequence ID" value="AAH28420.1"/>
    <property type="molecule type" value="mRNA"/>
</dbReference>
<dbReference type="EMBL" id="BC047583">
    <property type="protein sequence ID" value="AAH47583.1"/>
    <property type="molecule type" value="mRNA"/>
</dbReference>
<dbReference type="EMBL" id="AF173892">
    <property type="protein sequence ID" value="AAQ13639.1"/>
    <property type="status" value="ALT_INIT"/>
    <property type="molecule type" value="mRNA"/>
</dbReference>
<dbReference type="EMBL" id="AJ249902">
    <property type="protein sequence ID" value="CAC10353.1"/>
    <property type="molecule type" value="mRNA"/>
</dbReference>
<dbReference type="CCDS" id="CCDS5307.1">
    <molecule id="Q9H3U7-2"/>
</dbReference>
<dbReference type="CCDS" id="CCDS55076.1">
    <molecule id="Q9H3U7-1"/>
</dbReference>
<dbReference type="RefSeq" id="NP_001159884.1">
    <molecule id="Q9H3U7-1"/>
    <property type="nucleotide sequence ID" value="NM_001166412.2"/>
</dbReference>
<dbReference type="RefSeq" id="NP_071421.1">
    <molecule id="Q9H3U7-2"/>
    <property type="nucleotide sequence ID" value="NM_022138.3"/>
</dbReference>
<dbReference type="BioGRID" id="122056">
    <property type="interactions" value="8"/>
</dbReference>
<dbReference type="FunCoup" id="Q9H3U7">
    <property type="interactions" value="239"/>
</dbReference>
<dbReference type="IntAct" id="Q9H3U7">
    <property type="interactions" value="1"/>
</dbReference>
<dbReference type="STRING" id="9606.ENSP00000346537"/>
<dbReference type="GlyCosmos" id="Q9H3U7">
    <property type="glycosylation" value="2 sites, No reported glycans"/>
</dbReference>
<dbReference type="GlyGen" id="Q9H3U7">
    <property type="glycosylation" value="3 sites, 1 O-linked glycan (1 site)"/>
</dbReference>
<dbReference type="iPTMnet" id="Q9H3U7"/>
<dbReference type="PhosphoSitePlus" id="Q9H3U7"/>
<dbReference type="BioMuta" id="SMOC2"/>
<dbReference type="DMDM" id="38258648"/>
<dbReference type="jPOST" id="Q9H3U7"/>
<dbReference type="MassIVE" id="Q9H3U7"/>
<dbReference type="PaxDb" id="9606-ENSP00000346537"/>
<dbReference type="PeptideAtlas" id="Q9H3U7"/>
<dbReference type="ProteomicsDB" id="80763">
    <molecule id="Q9H3U7-1"/>
</dbReference>
<dbReference type="ProteomicsDB" id="80764">
    <molecule id="Q9H3U7-2"/>
</dbReference>
<dbReference type="Antibodypedia" id="33562">
    <property type="antibodies" value="129 antibodies from 24 providers"/>
</dbReference>
<dbReference type="DNASU" id="64094"/>
<dbReference type="Ensembl" id="ENST00000354536.9">
    <molecule id="Q9H3U7-2"/>
    <property type="protein sequence ID" value="ENSP00000346537.5"/>
    <property type="gene ID" value="ENSG00000112562.20"/>
</dbReference>
<dbReference type="Ensembl" id="ENST00000356284.7">
    <molecule id="Q9H3U7-1"/>
    <property type="protein sequence ID" value="ENSP00000348630.3"/>
    <property type="gene ID" value="ENSG00000112562.20"/>
</dbReference>
<dbReference type="GeneID" id="64094"/>
<dbReference type="KEGG" id="hsa:64094"/>
<dbReference type="MANE-Select" id="ENST00000356284.7">
    <property type="protein sequence ID" value="ENSP00000348630.3"/>
    <property type="RefSeq nucleotide sequence ID" value="NM_001166412.2"/>
    <property type="RefSeq protein sequence ID" value="NP_001159884.1"/>
</dbReference>
<dbReference type="UCSC" id="uc003qwr.2">
    <molecule id="Q9H3U7-1"/>
    <property type="organism name" value="human"/>
</dbReference>
<dbReference type="AGR" id="HGNC:20323"/>
<dbReference type="CTD" id="64094"/>
<dbReference type="DisGeNET" id="64094"/>
<dbReference type="GeneCards" id="SMOC2"/>
<dbReference type="HGNC" id="HGNC:20323">
    <property type="gene designation" value="SMOC2"/>
</dbReference>
<dbReference type="HPA" id="ENSG00000112562">
    <property type="expression patterns" value="Tissue enhanced (ovary)"/>
</dbReference>
<dbReference type="MalaCards" id="SMOC2"/>
<dbReference type="MIM" id="125400">
    <property type="type" value="phenotype"/>
</dbReference>
<dbReference type="MIM" id="607223">
    <property type="type" value="gene"/>
</dbReference>
<dbReference type="neXtProt" id="NX_Q9H3U7"/>
<dbReference type="OpenTargets" id="ENSG00000112562"/>
<dbReference type="Orphanet" id="314721">
    <property type="disease" value="Atypical dentin dysplasia due to SMOC2 deficiency"/>
</dbReference>
<dbReference type="PharmGKB" id="PA134934590"/>
<dbReference type="VEuPathDB" id="HostDB:ENSG00000112562"/>
<dbReference type="eggNOG" id="KOG4578">
    <property type="taxonomic scope" value="Eukaryota"/>
</dbReference>
<dbReference type="GeneTree" id="ENSGT00390000018436"/>
<dbReference type="HOGENOM" id="CLU_023483_0_0_1"/>
<dbReference type="InParanoid" id="Q9H3U7"/>
<dbReference type="OMA" id="KRMGPNP"/>
<dbReference type="OrthoDB" id="5986054at2759"/>
<dbReference type="PAN-GO" id="Q9H3U7">
    <property type="GO annotations" value="5 GO annotations based on evolutionary models"/>
</dbReference>
<dbReference type="PhylomeDB" id="Q9H3U7"/>
<dbReference type="TreeFam" id="TF320666"/>
<dbReference type="PathwayCommons" id="Q9H3U7"/>
<dbReference type="SignaLink" id="Q9H3U7"/>
<dbReference type="BioGRID-ORCS" id="64094">
    <property type="hits" value="10 hits in 1146 CRISPR screens"/>
</dbReference>
<dbReference type="ChiTaRS" id="SMOC2">
    <property type="organism name" value="human"/>
</dbReference>
<dbReference type="GeneWiki" id="SMOC2"/>
<dbReference type="GenomeRNAi" id="64094"/>
<dbReference type="Pharos" id="Q9H3U7">
    <property type="development level" value="Tbio"/>
</dbReference>
<dbReference type="PRO" id="PR:Q9H3U7"/>
<dbReference type="Proteomes" id="UP000005640">
    <property type="component" value="Chromosome 6"/>
</dbReference>
<dbReference type="RNAct" id="Q9H3U7">
    <property type="molecule type" value="protein"/>
</dbReference>
<dbReference type="Bgee" id="ENSG00000112562">
    <property type="expression patterns" value="Expressed in descending thoracic aorta and 165 other cell types or tissues"/>
</dbReference>
<dbReference type="ExpressionAtlas" id="Q9H3U7">
    <property type="expression patterns" value="baseline and differential"/>
</dbReference>
<dbReference type="GO" id="GO:0005604">
    <property type="term" value="C:basement membrane"/>
    <property type="evidence" value="ECO:0000318"/>
    <property type="project" value="GO_Central"/>
</dbReference>
<dbReference type="GO" id="GO:0071944">
    <property type="term" value="C:cell periphery"/>
    <property type="evidence" value="ECO:0000314"/>
    <property type="project" value="UniProtKB"/>
</dbReference>
<dbReference type="GO" id="GO:0005615">
    <property type="term" value="C:extracellular space"/>
    <property type="evidence" value="ECO:0000314"/>
    <property type="project" value="UniProtKB"/>
</dbReference>
<dbReference type="GO" id="GO:0005509">
    <property type="term" value="F:calcium ion binding"/>
    <property type="evidence" value="ECO:0000247"/>
    <property type="project" value="UniProtKB"/>
</dbReference>
<dbReference type="GO" id="GO:0050840">
    <property type="term" value="F:extracellular matrix binding"/>
    <property type="evidence" value="ECO:0000318"/>
    <property type="project" value="GO_Central"/>
</dbReference>
<dbReference type="GO" id="GO:0008201">
    <property type="term" value="F:heparin binding"/>
    <property type="evidence" value="ECO:0000318"/>
    <property type="project" value="GO_Central"/>
</dbReference>
<dbReference type="GO" id="GO:0030198">
    <property type="term" value="P:extracellular matrix organization"/>
    <property type="evidence" value="ECO:0000318"/>
    <property type="project" value="GO_Central"/>
</dbReference>
<dbReference type="GO" id="GO:0045766">
    <property type="term" value="P:positive regulation of angiogenesis"/>
    <property type="evidence" value="ECO:0000314"/>
    <property type="project" value="UniProtKB"/>
</dbReference>
<dbReference type="GO" id="GO:2000573">
    <property type="term" value="P:positive regulation of DNA biosynthetic process"/>
    <property type="evidence" value="ECO:0000314"/>
    <property type="project" value="UniProtKB"/>
</dbReference>
<dbReference type="GO" id="GO:2001028">
    <property type="term" value="P:positive regulation of endothelial cell chemotaxis"/>
    <property type="evidence" value="ECO:0000316"/>
    <property type="project" value="UniProtKB"/>
</dbReference>
<dbReference type="GO" id="GO:0010595">
    <property type="term" value="P:positive regulation of endothelial cell migration"/>
    <property type="evidence" value="ECO:0000314"/>
    <property type="project" value="UniProtKB"/>
</dbReference>
<dbReference type="GO" id="GO:0045743">
    <property type="term" value="P:positive regulation of fibroblast growth factor receptor signaling pathway"/>
    <property type="evidence" value="ECO:0000314"/>
    <property type="project" value="UniProtKB"/>
</dbReference>
<dbReference type="GO" id="GO:0045931">
    <property type="term" value="P:positive regulation of mitotic cell cycle"/>
    <property type="evidence" value="ECO:0000314"/>
    <property type="project" value="UniProtKB"/>
</dbReference>
<dbReference type="GO" id="GO:1900748">
    <property type="term" value="P:positive regulation of vascular endothelial growth factor signaling pathway"/>
    <property type="evidence" value="ECO:0000314"/>
    <property type="project" value="UniProtKB"/>
</dbReference>
<dbReference type="GO" id="GO:0035470">
    <property type="term" value="P:positive regulation of vascular wound healing"/>
    <property type="evidence" value="ECO:0000314"/>
    <property type="project" value="UniProtKB"/>
</dbReference>
<dbReference type="CDD" id="cd16241">
    <property type="entry name" value="EFh_SPARC_SMOC2"/>
    <property type="match status" value="1"/>
</dbReference>
<dbReference type="CDD" id="cd00104">
    <property type="entry name" value="KAZAL_FS"/>
    <property type="match status" value="1"/>
</dbReference>
<dbReference type="CDD" id="cd00191">
    <property type="entry name" value="TY"/>
    <property type="match status" value="2"/>
</dbReference>
<dbReference type="FunFam" id="1.10.238.10:FF:000076">
    <property type="entry name" value="SPARC-related modular calcium binding protein 1"/>
    <property type="match status" value="1"/>
</dbReference>
<dbReference type="FunFam" id="3.30.60.30:FF:000012">
    <property type="entry name" value="SPARC-related modular calcium binding protein 1"/>
    <property type="match status" value="1"/>
</dbReference>
<dbReference type="FunFam" id="4.10.800.10:FF:000004">
    <property type="entry name" value="SPARC-related modular calcium-binding protein 1"/>
    <property type="match status" value="1"/>
</dbReference>
<dbReference type="FunFam" id="4.10.800.10:FF:000003">
    <property type="entry name" value="SPARC-related modular calcium-binding protein 2 isoform 1"/>
    <property type="match status" value="1"/>
</dbReference>
<dbReference type="Gene3D" id="3.30.60.30">
    <property type="match status" value="1"/>
</dbReference>
<dbReference type="Gene3D" id="1.10.238.10">
    <property type="entry name" value="EF-hand"/>
    <property type="match status" value="1"/>
</dbReference>
<dbReference type="Gene3D" id="4.10.800.10">
    <property type="entry name" value="Thyroglobulin type-1"/>
    <property type="match status" value="2"/>
</dbReference>
<dbReference type="InterPro" id="IPR051950">
    <property type="entry name" value="Dev_reg/Prot_inhib"/>
</dbReference>
<dbReference type="InterPro" id="IPR011992">
    <property type="entry name" value="EF-hand-dom_pair"/>
</dbReference>
<dbReference type="InterPro" id="IPR018247">
    <property type="entry name" value="EF_Hand_1_Ca_BS"/>
</dbReference>
<dbReference type="InterPro" id="IPR002048">
    <property type="entry name" value="EF_hand_dom"/>
</dbReference>
<dbReference type="InterPro" id="IPR002350">
    <property type="entry name" value="Kazal_dom"/>
</dbReference>
<dbReference type="InterPro" id="IPR036058">
    <property type="entry name" value="Kazal_dom_sf"/>
</dbReference>
<dbReference type="InterPro" id="IPR037640">
    <property type="entry name" value="SMOC2_EC"/>
</dbReference>
<dbReference type="InterPro" id="IPR019577">
    <property type="entry name" value="SPARC/Testican_Ca-bd-dom"/>
</dbReference>
<dbReference type="InterPro" id="IPR000716">
    <property type="entry name" value="Thyroglobulin_1"/>
</dbReference>
<dbReference type="InterPro" id="IPR036857">
    <property type="entry name" value="Thyroglobulin_1_sf"/>
</dbReference>
<dbReference type="PANTHER" id="PTHR12352">
    <property type="entry name" value="SECRETED MODULAR CALCIUM-BINDING PROTEIN"/>
    <property type="match status" value="1"/>
</dbReference>
<dbReference type="PANTHER" id="PTHR12352:SF21">
    <property type="entry name" value="SPARC-RELATED MODULAR CALCIUM-BINDING PROTEIN 2"/>
    <property type="match status" value="1"/>
</dbReference>
<dbReference type="Pfam" id="PF07648">
    <property type="entry name" value="Kazal_2"/>
    <property type="match status" value="1"/>
</dbReference>
<dbReference type="Pfam" id="PF10591">
    <property type="entry name" value="SPARC_Ca_bdg"/>
    <property type="match status" value="1"/>
</dbReference>
<dbReference type="Pfam" id="PF16597">
    <property type="entry name" value="Thyroglob_assoc"/>
    <property type="match status" value="1"/>
</dbReference>
<dbReference type="Pfam" id="PF00086">
    <property type="entry name" value="Thyroglobulin_1"/>
    <property type="match status" value="2"/>
</dbReference>
<dbReference type="SMART" id="SM00280">
    <property type="entry name" value="KAZAL"/>
    <property type="match status" value="1"/>
</dbReference>
<dbReference type="SMART" id="SM00211">
    <property type="entry name" value="TY"/>
    <property type="match status" value="2"/>
</dbReference>
<dbReference type="SUPFAM" id="SSF47473">
    <property type="entry name" value="EF-hand"/>
    <property type="match status" value="1"/>
</dbReference>
<dbReference type="SUPFAM" id="SSF100895">
    <property type="entry name" value="Kazal-type serine protease inhibitors"/>
    <property type="match status" value="1"/>
</dbReference>
<dbReference type="SUPFAM" id="SSF57610">
    <property type="entry name" value="Thyroglobulin type-1 domain"/>
    <property type="match status" value="2"/>
</dbReference>
<dbReference type="PROSITE" id="PS00018">
    <property type="entry name" value="EF_HAND_1"/>
    <property type="match status" value="2"/>
</dbReference>
<dbReference type="PROSITE" id="PS50222">
    <property type="entry name" value="EF_HAND_2"/>
    <property type="match status" value="2"/>
</dbReference>
<dbReference type="PROSITE" id="PS51465">
    <property type="entry name" value="KAZAL_2"/>
    <property type="match status" value="1"/>
</dbReference>
<dbReference type="PROSITE" id="PS00484">
    <property type="entry name" value="THYROGLOBULIN_1_1"/>
    <property type="match status" value="2"/>
</dbReference>
<dbReference type="PROSITE" id="PS51162">
    <property type="entry name" value="THYROGLOBULIN_1_2"/>
    <property type="match status" value="2"/>
</dbReference>
<proteinExistence type="evidence at protein level"/>
<name>SMOC2_HUMAN</name>
<comment type="function">
    <text evidence="1 7">Promotes matrix assembly and cell adhesiveness (By similarity). Can stimulate endothelial cell proliferation, migration, as well as angiogenesis.</text>
</comment>
<comment type="subunit">
    <text evidence="1">Binds various proteins from the extracellular matrix.</text>
</comment>
<comment type="interaction">
    <interactant intactId="EBI-12767060">
        <id>Q9H3U7</id>
    </interactant>
    <interactant intactId="EBI-12074540">
        <id>Q6L8H4</id>
        <label>KRTAP5-1</label>
    </interactant>
    <organismsDiffer>false</organismsDiffer>
    <experiments>3</experiments>
</comment>
<comment type="subcellular location">
    <subcellularLocation>
        <location evidence="1">Secreted</location>
        <location evidence="1">Extracellular space</location>
        <location evidence="1">Extracellular matrix</location>
        <location evidence="1">Basement membrane</location>
    </subcellularLocation>
</comment>
<comment type="alternative products">
    <event type="alternative splicing"/>
    <isoform>
        <id>Q9H3U7-1</id>
        <name>1</name>
        <name>Smap2</name>
        <sequence type="displayed"/>
    </isoform>
    <isoform>
        <id>Q9H3U7-2</id>
        <name>2</name>
        <name>Smap2b</name>
        <sequence type="described" ref="VSP_008722"/>
    </isoform>
</comment>
<comment type="disease" evidence="8">
    <disease id="DI-03347">
        <name>Dentin dysplasia 1</name>
        <acronym>DTDP1</acronym>
        <description>A dental defect in which both primary and secondary dentitions are affected. The clinical crowns of both permanent and deciduous teeth are of normal shape, form and color in most cases, although they may be slightly opalescent and blue or brown. Teeth may be very mobile and exfoliate spontaneously because of inadequate root formation. On radiographs, the roots are short and may be more pointed than normal. Pulp chambers are usually absent except for a chevron-shaped remnant in the crown. Root canals are usually absent.</description>
        <dbReference type="MIM" id="125400"/>
    </disease>
    <text>The disease is caused by variants affecting the gene represented in this entry.</text>
</comment>
<comment type="sequence caution" evidence="11">
    <conflict type="erroneous initiation">
        <sequence resource="EMBL-CDS" id="AAQ13639"/>
    </conflict>
    <text>Truncated N-terminus.</text>
</comment>
<keyword id="KW-0025">Alternative splicing</keyword>
<keyword id="KW-0084">Basement membrane</keyword>
<keyword id="KW-0106">Calcium</keyword>
<keyword id="KW-1015">Disulfide bond</keyword>
<keyword id="KW-0272">Extracellular matrix</keyword>
<keyword id="KW-0325">Glycoprotein</keyword>
<keyword id="KW-0479">Metal-binding</keyword>
<keyword id="KW-1267">Proteomics identification</keyword>
<keyword id="KW-1185">Reference proteome</keyword>
<keyword id="KW-0677">Repeat</keyword>
<keyword id="KW-0964">Secreted</keyword>
<keyword id="KW-0732">Signal</keyword>
<organism>
    <name type="scientific">Homo sapiens</name>
    <name type="common">Human</name>
    <dbReference type="NCBI Taxonomy" id="9606"/>
    <lineage>
        <taxon>Eukaryota</taxon>
        <taxon>Metazoa</taxon>
        <taxon>Chordata</taxon>
        <taxon>Craniata</taxon>
        <taxon>Vertebrata</taxon>
        <taxon>Euteleostomi</taxon>
        <taxon>Mammalia</taxon>
        <taxon>Eutheria</taxon>
        <taxon>Euarchontoglires</taxon>
        <taxon>Primates</taxon>
        <taxon>Haplorrhini</taxon>
        <taxon>Catarrhini</taxon>
        <taxon>Hominidae</taxon>
        <taxon>Homo</taxon>
    </lineage>
</organism>